<feature type="chain" id="PRO_0000211728" description="DNA gyrase inhibitor YacG">
    <location>
        <begin position="1"/>
        <end position="65"/>
    </location>
</feature>
<feature type="region of interest" description="Disordered" evidence="2">
    <location>
        <begin position="45"/>
        <end position="65"/>
    </location>
</feature>
<feature type="compositionally biased region" description="Acidic residues" evidence="2">
    <location>
        <begin position="55"/>
        <end position="65"/>
    </location>
</feature>
<feature type="binding site" evidence="1">
    <location>
        <position position="10"/>
    </location>
    <ligand>
        <name>Zn(2+)</name>
        <dbReference type="ChEBI" id="CHEBI:29105"/>
    </ligand>
</feature>
<feature type="binding site" evidence="1">
    <location>
        <position position="13"/>
    </location>
    <ligand>
        <name>Zn(2+)</name>
        <dbReference type="ChEBI" id="CHEBI:29105"/>
    </ligand>
</feature>
<feature type="binding site" evidence="1">
    <location>
        <position position="29"/>
    </location>
    <ligand>
        <name>Zn(2+)</name>
        <dbReference type="ChEBI" id="CHEBI:29105"/>
    </ligand>
</feature>
<feature type="binding site" evidence="1">
    <location>
        <position position="33"/>
    </location>
    <ligand>
        <name>Zn(2+)</name>
        <dbReference type="ChEBI" id="CHEBI:29105"/>
    </ligand>
</feature>
<reference key="1">
    <citation type="journal article" date="2000" name="Nature">
        <title>DNA sequence of both chromosomes of the cholera pathogen Vibrio cholerae.</title>
        <authorList>
            <person name="Heidelberg J.F."/>
            <person name="Eisen J.A."/>
            <person name="Nelson W.C."/>
            <person name="Clayton R.A."/>
            <person name="Gwinn M.L."/>
            <person name="Dodson R.J."/>
            <person name="Haft D.H."/>
            <person name="Hickey E.K."/>
            <person name="Peterson J.D."/>
            <person name="Umayam L.A."/>
            <person name="Gill S.R."/>
            <person name="Nelson K.E."/>
            <person name="Read T.D."/>
            <person name="Tettelin H."/>
            <person name="Richardson D.L."/>
            <person name="Ermolaeva M.D."/>
            <person name="Vamathevan J.J."/>
            <person name="Bass S."/>
            <person name="Qin H."/>
            <person name="Dragoi I."/>
            <person name="Sellers P."/>
            <person name="McDonald L.A."/>
            <person name="Utterback T.R."/>
            <person name="Fleischmann R.D."/>
            <person name="Nierman W.C."/>
            <person name="White O."/>
            <person name="Salzberg S.L."/>
            <person name="Smith H.O."/>
            <person name="Colwell R.R."/>
            <person name="Mekalanos J.J."/>
            <person name="Venter J.C."/>
            <person name="Fraser C.M."/>
        </authorList>
    </citation>
    <scope>NUCLEOTIDE SEQUENCE [LARGE SCALE GENOMIC DNA]</scope>
    <source>
        <strain>ATCC 39315 / El Tor Inaba N16961</strain>
    </source>
</reference>
<sequence length="65" mass="7397">MTKKLTIVKCPRCGTDVEWGEQSPHRPFCSKQCQMIDFGEWADEEKAIPGAPDMSDSDGWSEDQY</sequence>
<name>YACG_VIBCH</name>
<accession>Q9KPE1</accession>
<comment type="function">
    <text evidence="1">Inhibits all the catalytic activities of DNA gyrase by preventing its interaction with DNA. Acts by binding directly to the C-terminal domain of GyrB, which probably disrupts DNA binding by the gyrase.</text>
</comment>
<comment type="cofactor">
    <cofactor evidence="1">
        <name>Zn(2+)</name>
        <dbReference type="ChEBI" id="CHEBI:29105"/>
    </cofactor>
    <text evidence="1">Binds 1 zinc ion.</text>
</comment>
<comment type="subunit">
    <text evidence="1">Interacts with GyrB.</text>
</comment>
<comment type="similarity">
    <text evidence="1">Belongs to the DNA gyrase inhibitor YacG family.</text>
</comment>
<organism>
    <name type="scientific">Vibrio cholerae serotype O1 (strain ATCC 39315 / El Tor Inaba N16961)</name>
    <dbReference type="NCBI Taxonomy" id="243277"/>
    <lineage>
        <taxon>Bacteria</taxon>
        <taxon>Pseudomonadati</taxon>
        <taxon>Pseudomonadota</taxon>
        <taxon>Gammaproteobacteria</taxon>
        <taxon>Vibrionales</taxon>
        <taxon>Vibrionaceae</taxon>
        <taxon>Vibrio</taxon>
    </lineage>
</organism>
<proteinExistence type="inferred from homology"/>
<protein>
    <recommendedName>
        <fullName evidence="1">DNA gyrase inhibitor YacG</fullName>
    </recommendedName>
</protein>
<evidence type="ECO:0000255" key="1">
    <source>
        <dbReference type="HAMAP-Rule" id="MF_00649"/>
    </source>
</evidence>
<evidence type="ECO:0000256" key="2">
    <source>
        <dbReference type="SAM" id="MobiDB-lite"/>
    </source>
</evidence>
<dbReference type="EMBL" id="AE003852">
    <property type="protein sequence ID" value="AAF95572.1"/>
    <property type="molecule type" value="Genomic_DNA"/>
</dbReference>
<dbReference type="PIR" id="E82078">
    <property type="entry name" value="E82078"/>
</dbReference>
<dbReference type="RefSeq" id="NP_232059.1">
    <property type="nucleotide sequence ID" value="NC_002505.1"/>
</dbReference>
<dbReference type="RefSeq" id="WP_000162868.1">
    <property type="nucleotide sequence ID" value="NZ_LT906614.1"/>
</dbReference>
<dbReference type="SMR" id="Q9KPE1"/>
<dbReference type="STRING" id="243277.VC_2429"/>
<dbReference type="DNASU" id="2612971"/>
<dbReference type="EnsemblBacteria" id="AAF95572">
    <property type="protein sequence ID" value="AAF95572"/>
    <property type="gene ID" value="VC_2429"/>
</dbReference>
<dbReference type="KEGG" id="vch:VC_2429"/>
<dbReference type="PATRIC" id="fig|243277.26.peg.2313"/>
<dbReference type="eggNOG" id="COG3024">
    <property type="taxonomic scope" value="Bacteria"/>
</dbReference>
<dbReference type="HOGENOM" id="CLU_178280_3_1_6"/>
<dbReference type="Proteomes" id="UP000000584">
    <property type="component" value="Chromosome 1"/>
</dbReference>
<dbReference type="GO" id="GO:0008657">
    <property type="term" value="F:DNA topoisomerase type II (double strand cut, ATP-hydrolyzing) inhibitor activity"/>
    <property type="evidence" value="ECO:0000318"/>
    <property type="project" value="GO_Central"/>
</dbReference>
<dbReference type="GO" id="GO:0008270">
    <property type="term" value="F:zinc ion binding"/>
    <property type="evidence" value="ECO:0007669"/>
    <property type="project" value="UniProtKB-UniRule"/>
</dbReference>
<dbReference type="GO" id="GO:0006355">
    <property type="term" value="P:regulation of DNA-templated transcription"/>
    <property type="evidence" value="ECO:0007669"/>
    <property type="project" value="InterPro"/>
</dbReference>
<dbReference type="Gene3D" id="3.30.50.10">
    <property type="entry name" value="Erythroid Transcription Factor GATA-1, subunit A"/>
    <property type="match status" value="1"/>
</dbReference>
<dbReference type="HAMAP" id="MF_00649">
    <property type="entry name" value="DNA_gyrase_inhibitor_YacG"/>
    <property type="match status" value="1"/>
</dbReference>
<dbReference type="InterPro" id="IPR005584">
    <property type="entry name" value="DNA_gyrase_inhibitor_YacG"/>
</dbReference>
<dbReference type="InterPro" id="IPR013088">
    <property type="entry name" value="Znf_NHR/GATA"/>
</dbReference>
<dbReference type="NCBIfam" id="NF001638">
    <property type="entry name" value="PRK00418.1"/>
    <property type="match status" value="1"/>
</dbReference>
<dbReference type="PANTHER" id="PTHR36150">
    <property type="entry name" value="DNA GYRASE INHIBITOR YACG"/>
    <property type="match status" value="1"/>
</dbReference>
<dbReference type="PANTHER" id="PTHR36150:SF1">
    <property type="entry name" value="DNA GYRASE INHIBITOR YACG"/>
    <property type="match status" value="1"/>
</dbReference>
<dbReference type="Pfam" id="PF03884">
    <property type="entry name" value="YacG"/>
    <property type="match status" value="1"/>
</dbReference>
<dbReference type="SUPFAM" id="SSF57716">
    <property type="entry name" value="Glucocorticoid receptor-like (DNA-binding domain)"/>
    <property type="match status" value="1"/>
</dbReference>
<gene>
    <name evidence="1" type="primary">yacG</name>
    <name type="ordered locus">VC_2429</name>
</gene>
<keyword id="KW-0479">Metal-binding</keyword>
<keyword id="KW-1185">Reference proteome</keyword>
<keyword id="KW-0862">Zinc</keyword>